<name>CD1B_RABIT</name>
<keyword id="KW-1064">Adaptive immunity</keyword>
<keyword id="KW-1003">Cell membrane</keyword>
<keyword id="KW-0967">Endosome</keyword>
<keyword id="KW-0325">Glycoprotein</keyword>
<keyword id="KW-0391">Immunity</keyword>
<keyword id="KW-0393">Immunoglobulin domain</keyword>
<keyword id="KW-0458">Lysosome</keyword>
<keyword id="KW-0472">Membrane</keyword>
<keyword id="KW-1185">Reference proteome</keyword>
<keyword id="KW-0732">Signal</keyword>
<comment type="function">
    <text evidence="1">Antigen-presenting protein that binds self and non-self lipid and glycolipid antigens and presents them to T-cell receptors on natural killer T-cells.</text>
</comment>
<comment type="subunit">
    <text evidence="1">Heterodimer with B2M (beta-2-microglobulin). Interacts with saposin C (By similarity).</text>
</comment>
<comment type="subcellular location">
    <subcellularLocation>
        <location evidence="2">Cell membrane</location>
        <topology evidence="3">Single-pass type I membrane protein</topology>
    </subcellularLocation>
    <subcellularLocation>
        <location evidence="2">Endosome membrane</location>
        <topology evidence="3">Single-pass type I membrane protein</topology>
    </subcellularLocation>
    <subcellularLocation>
        <location evidence="2">Lysosome membrane</location>
        <topology evidence="3">Single-pass type I membrane protein</topology>
    </subcellularLocation>
    <text evidence="2">Subject to intracellular trafficking between the cell membrane, endosomes and lysosomes.</text>
</comment>
<comment type="tissue specificity">
    <text>Expressed on cortical thymocytes, on certain T-cell leukemias, and in various other tissues.</text>
</comment>
<comment type="miscellaneous">
    <text evidence="1">During protein synthesis and maturation, CD1 family members bind endogenous lipids that are replaced by lipid or glycolipid antigens when the proteins are internalized and pass through endosomes or lysosomes, before trafficking back to the cell surface. Interaction with saposin C is required for the loading of bacterial lipid antigens onto CD1B in the lysosome (By similarity).</text>
</comment>
<sequence>MLLLPLLLLAGRFPGGDNEDALQGPTSYHVMQISSFTNSTWTENRGSGWLEDLQIHRWDSETGTAIFLKPWSKGNLSDEEITELVELFRVYFFGLVRELRDHVTEFQMK</sequence>
<dbReference type="EMBL" id="M26248">
    <property type="protein sequence ID" value="AAA31196.1"/>
    <property type="molecule type" value="Genomic_DNA"/>
</dbReference>
<dbReference type="PIR" id="A45887">
    <property type="entry name" value="A45887"/>
</dbReference>
<dbReference type="SMR" id="P23042"/>
<dbReference type="STRING" id="9986.ENSOCUP00000039013"/>
<dbReference type="GlyCosmos" id="P23042">
    <property type="glycosylation" value="2 sites, No reported glycans"/>
</dbReference>
<dbReference type="PaxDb" id="9986-ENSOCUP00000009701"/>
<dbReference type="eggNOG" id="ENOG502SJH6">
    <property type="taxonomic scope" value="Eukaryota"/>
</dbReference>
<dbReference type="InParanoid" id="P23042"/>
<dbReference type="Proteomes" id="UP000001811">
    <property type="component" value="Unplaced"/>
</dbReference>
<dbReference type="GO" id="GO:0010008">
    <property type="term" value="C:endosome membrane"/>
    <property type="evidence" value="ECO:0007669"/>
    <property type="project" value="UniProtKB-SubCell"/>
</dbReference>
<dbReference type="GO" id="GO:0005765">
    <property type="term" value="C:lysosomal membrane"/>
    <property type="evidence" value="ECO:0007669"/>
    <property type="project" value="UniProtKB-SubCell"/>
</dbReference>
<dbReference type="GO" id="GO:0005886">
    <property type="term" value="C:plasma membrane"/>
    <property type="evidence" value="ECO:0007669"/>
    <property type="project" value="UniProtKB-SubCell"/>
</dbReference>
<dbReference type="GO" id="GO:0002250">
    <property type="term" value="P:adaptive immune response"/>
    <property type="evidence" value="ECO:0007669"/>
    <property type="project" value="UniProtKB-KW"/>
</dbReference>
<dbReference type="Gene3D" id="3.30.500.10">
    <property type="entry name" value="MHC class I-like antigen recognition-like"/>
    <property type="match status" value="1"/>
</dbReference>
<dbReference type="InterPro" id="IPR011161">
    <property type="entry name" value="MHC_I-like_Ag-recog"/>
</dbReference>
<dbReference type="InterPro" id="IPR037055">
    <property type="entry name" value="MHC_I-like_Ag-recog_sf"/>
</dbReference>
<dbReference type="InterPro" id="IPR011162">
    <property type="entry name" value="MHC_I/II-like_Ag-recog"/>
</dbReference>
<dbReference type="Pfam" id="PF16497">
    <property type="entry name" value="MHC_I_3"/>
    <property type="match status" value="1"/>
</dbReference>
<dbReference type="SUPFAM" id="SSF54452">
    <property type="entry name" value="MHC antigen-recognition domain"/>
    <property type="match status" value="1"/>
</dbReference>
<organism>
    <name type="scientific">Oryctolagus cuniculus</name>
    <name type="common">Rabbit</name>
    <dbReference type="NCBI Taxonomy" id="9986"/>
    <lineage>
        <taxon>Eukaryota</taxon>
        <taxon>Metazoa</taxon>
        <taxon>Chordata</taxon>
        <taxon>Craniata</taxon>
        <taxon>Vertebrata</taxon>
        <taxon>Euteleostomi</taxon>
        <taxon>Mammalia</taxon>
        <taxon>Eutheria</taxon>
        <taxon>Euarchontoglires</taxon>
        <taxon>Glires</taxon>
        <taxon>Lagomorpha</taxon>
        <taxon>Leporidae</taxon>
        <taxon>Oryctolagus</taxon>
    </lineage>
</organism>
<reference key="1">
    <citation type="journal article" date="1989" name="Immunogenetics">
        <title>The rabbit CD1 and the evolutionary conservation of the CD1 gene family.</title>
        <authorList>
            <person name="Calabi F."/>
            <person name="Belt K.T."/>
            <person name="Yu C.Y."/>
            <person name="Bradbury A."/>
            <person name="Mandy W.J."/>
            <person name="Milstein C."/>
        </authorList>
    </citation>
    <scope>NUCLEOTIDE SEQUENCE [GENOMIC DNA]</scope>
</reference>
<accession>P23042</accession>
<protein>
    <recommendedName>
        <fullName>T-cell surface glycoprotein CD1b</fullName>
    </recommendedName>
    <alternativeName>
        <fullName>Leukocyte differentiation-like antigen Ta</fullName>
    </alternativeName>
    <cdAntigenName>CD1b</cdAntigenName>
</protein>
<proteinExistence type="evidence at transcript level"/>
<feature type="signal peptide" evidence="3">
    <location>
        <begin position="1"/>
        <end position="18"/>
    </location>
</feature>
<feature type="chain" id="PRO_0000014594" description="T-cell surface glycoprotein CD1b">
    <location>
        <begin position="19"/>
        <end position="109" status="greater than"/>
    </location>
</feature>
<feature type="glycosylation site" description="N-linked (GlcNAc...) asparagine" evidence="3">
    <location>
        <position position="38"/>
    </location>
</feature>
<feature type="glycosylation site" description="N-linked (GlcNAc...) asparagine" evidence="3">
    <location>
        <position position="75"/>
    </location>
</feature>
<feature type="non-terminal residue">
    <location>
        <position position="109"/>
    </location>
</feature>
<gene>
    <name type="primary">CD1B</name>
</gene>
<evidence type="ECO:0000250" key="1"/>
<evidence type="ECO:0000250" key="2">
    <source>
        <dbReference type="UniProtKB" id="P29016"/>
    </source>
</evidence>
<evidence type="ECO:0000255" key="3"/>